<accession>O84351</accession>
<evidence type="ECO:0000255" key="1">
    <source>
        <dbReference type="HAMAP-Rule" id="MF_01808"/>
    </source>
</evidence>
<evidence type="ECO:0000255" key="2">
    <source>
        <dbReference type="PROSITE-ProRule" id="PRU01246"/>
    </source>
</evidence>
<evidence type="ECO:0000255" key="3">
    <source>
        <dbReference type="PROSITE-ProRule" id="PRU01248"/>
    </source>
</evidence>
<proteinExistence type="inferred from homology"/>
<comment type="function">
    <text evidence="1">Site-specific tyrosine recombinase, which acts by catalyzing the cutting and rejoining of the recombining DNA molecules. The XerC-XerD complex is essential to convert dimers of the bacterial chromosome into monomers to permit their segregation at cell division. It also contributes to the segregational stability of plasmids.</text>
</comment>
<comment type="subunit">
    <text evidence="1">Forms a cyclic heterotetrameric complex composed of two molecules of XerC and two molecules of XerD.</text>
</comment>
<comment type="subcellular location">
    <subcellularLocation>
        <location evidence="1">Cytoplasm</location>
    </subcellularLocation>
</comment>
<comment type="similarity">
    <text evidence="1">Belongs to the 'phage' integrase family. XerC subfamily.</text>
</comment>
<keyword id="KW-0131">Cell cycle</keyword>
<keyword id="KW-0132">Cell division</keyword>
<keyword id="KW-0159">Chromosome partition</keyword>
<keyword id="KW-0963">Cytoplasm</keyword>
<keyword id="KW-0229">DNA integration</keyword>
<keyword id="KW-0233">DNA recombination</keyword>
<keyword id="KW-0238">DNA-binding</keyword>
<keyword id="KW-1185">Reference proteome</keyword>
<name>XERC_CHLTR</name>
<organism>
    <name type="scientific">Chlamydia trachomatis serovar D (strain ATCC VR-885 / DSM 19411 / UW-3/Cx)</name>
    <dbReference type="NCBI Taxonomy" id="272561"/>
    <lineage>
        <taxon>Bacteria</taxon>
        <taxon>Pseudomonadati</taxon>
        <taxon>Chlamydiota</taxon>
        <taxon>Chlamydiia</taxon>
        <taxon>Chlamydiales</taxon>
        <taxon>Chlamydiaceae</taxon>
        <taxon>Chlamydia/Chlamydophila group</taxon>
        <taxon>Chlamydia</taxon>
    </lineage>
</organism>
<gene>
    <name evidence="1" type="primary">xerC</name>
    <name type="ordered locus">CT_347</name>
</gene>
<protein>
    <recommendedName>
        <fullName evidence="1">Tyrosine recombinase XerC</fullName>
    </recommendedName>
</protein>
<reference key="1">
    <citation type="journal article" date="1998" name="Science">
        <title>Genome sequence of an obligate intracellular pathogen of humans: Chlamydia trachomatis.</title>
        <authorList>
            <person name="Stephens R.S."/>
            <person name="Kalman S."/>
            <person name="Lammel C.J."/>
            <person name="Fan J."/>
            <person name="Marathe R."/>
            <person name="Aravind L."/>
            <person name="Mitchell W.P."/>
            <person name="Olinger L."/>
            <person name="Tatusov R.L."/>
            <person name="Zhao Q."/>
            <person name="Koonin E.V."/>
            <person name="Davis R.W."/>
        </authorList>
    </citation>
    <scope>NUCLEOTIDE SEQUENCE [LARGE SCALE GENOMIC DNA]</scope>
    <source>
        <strain>ATCC VR-885 / DSM 19411 / UW-3/Cx</strain>
    </source>
</reference>
<dbReference type="EMBL" id="AE001273">
    <property type="protein sequence ID" value="AAC67942.1"/>
    <property type="molecule type" value="Genomic_DNA"/>
</dbReference>
<dbReference type="PIR" id="D71525">
    <property type="entry name" value="D71525"/>
</dbReference>
<dbReference type="RefSeq" id="NP_219854.1">
    <property type="nucleotide sequence ID" value="NC_000117.1"/>
</dbReference>
<dbReference type="RefSeq" id="WP_009872581.1">
    <property type="nucleotide sequence ID" value="NC_000117.1"/>
</dbReference>
<dbReference type="SMR" id="O84351"/>
<dbReference type="STRING" id="272561.CT_347"/>
<dbReference type="EnsemblBacteria" id="AAC67942">
    <property type="protein sequence ID" value="AAC67942"/>
    <property type="gene ID" value="CT_347"/>
</dbReference>
<dbReference type="GeneID" id="884772"/>
<dbReference type="KEGG" id="ctr:CT_347"/>
<dbReference type="PATRIC" id="fig|272561.5.peg.375"/>
<dbReference type="HOGENOM" id="CLU_027562_9_0_0"/>
<dbReference type="InParanoid" id="O84351"/>
<dbReference type="OrthoDB" id="9801717at2"/>
<dbReference type="Proteomes" id="UP000000431">
    <property type="component" value="Chromosome"/>
</dbReference>
<dbReference type="GO" id="GO:0005737">
    <property type="term" value="C:cytoplasm"/>
    <property type="evidence" value="ECO:0007669"/>
    <property type="project" value="UniProtKB-SubCell"/>
</dbReference>
<dbReference type="GO" id="GO:0003677">
    <property type="term" value="F:DNA binding"/>
    <property type="evidence" value="ECO:0007669"/>
    <property type="project" value="UniProtKB-KW"/>
</dbReference>
<dbReference type="GO" id="GO:0009009">
    <property type="term" value="F:site-specific recombinase activity"/>
    <property type="evidence" value="ECO:0000318"/>
    <property type="project" value="GO_Central"/>
</dbReference>
<dbReference type="GO" id="GO:0009037">
    <property type="term" value="F:tyrosine-based site-specific recombinase activity"/>
    <property type="evidence" value="ECO:0007669"/>
    <property type="project" value="UniProtKB-UniRule"/>
</dbReference>
<dbReference type="GO" id="GO:0051301">
    <property type="term" value="P:cell division"/>
    <property type="evidence" value="ECO:0007669"/>
    <property type="project" value="UniProtKB-KW"/>
</dbReference>
<dbReference type="GO" id="GO:0007059">
    <property type="term" value="P:chromosome segregation"/>
    <property type="evidence" value="ECO:0000318"/>
    <property type="project" value="GO_Central"/>
</dbReference>
<dbReference type="GO" id="GO:0006310">
    <property type="term" value="P:DNA recombination"/>
    <property type="evidence" value="ECO:0000318"/>
    <property type="project" value="GO_Central"/>
</dbReference>
<dbReference type="GO" id="GO:0006313">
    <property type="term" value="P:DNA transposition"/>
    <property type="evidence" value="ECO:0007669"/>
    <property type="project" value="UniProtKB-UniRule"/>
</dbReference>
<dbReference type="CDD" id="cd00798">
    <property type="entry name" value="INT_XerDC_C"/>
    <property type="match status" value="1"/>
</dbReference>
<dbReference type="Gene3D" id="1.10.150.130">
    <property type="match status" value="1"/>
</dbReference>
<dbReference type="Gene3D" id="1.10.443.10">
    <property type="entry name" value="Intergrase catalytic core"/>
    <property type="match status" value="1"/>
</dbReference>
<dbReference type="HAMAP" id="MF_01808">
    <property type="entry name" value="Recomb_XerC_XerD"/>
    <property type="match status" value="1"/>
</dbReference>
<dbReference type="InterPro" id="IPR044068">
    <property type="entry name" value="CB"/>
</dbReference>
<dbReference type="InterPro" id="IPR011010">
    <property type="entry name" value="DNA_brk_join_enz"/>
</dbReference>
<dbReference type="InterPro" id="IPR013762">
    <property type="entry name" value="Integrase-like_cat_sf"/>
</dbReference>
<dbReference type="InterPro" id="IPR002104">
    <property type="entry name" value="Integrase_catalytic"/>
</dbReference>
<dbReference type="InterPro" id="IPR010998">
    <property type="entry name" value="Integrase_recombinase_N"/>
</dbReference>
<dbReference type="InterPro" id="IPR004107">
    <property type="entry name" value="Integrase_SAM-like_N"/>
</dbReference>
<dbReference type="InterPro" id="IPR011931">
    <property type="entry name" value="Recomb_XerC"/>
</dbReference>
<dbReference type="InterPro" id="IPR023009">
    <property type="entry name" value="Tyrosine_recombinase_XerC/XerD"/>
</dbReference>
<dbReference type="InterPro" id="IPR050090">
    <property type="entry name" value="Tyrosine_recombinase_XerCD"/>
</dbReference>
<dbReference type="NCBIfam" id="TIGR02224">
    <property type="entry name" value="recomb_XerC"/>
    <property type="match status" value="1"/>
</dbReference>
<dbReference type="PANTHER" id="PTHR30349">
    <property type="entry name" value="PHAGE INTEGRASE-RELATED"/>
    <property type="match status" value="1"/>
</dbReference>
<dbReference type="PANTHER" id="PTHR30349:SF77">
    <property type="entry name" value="TYROSINE RECOMBINASE XERC"/>
    <property type="match status" value="1"/>
</dbReference>
<dbReference type="Pfam" id="PF02899">
    <property type="entry name" value="Phage_int_SAM_1"/>
    <property type="match status" value="1"/>
</dbReference>
<dbReference type="Pfam" id="PF00589">
    <property type="entry name" value="Phage_integrase"/>
    <property type="match status" value="1"/>
</dbReference>
<dbReference type="SUPFAM" id="SSF56349">
    <property type="entry name" value="DNA breaking-rejoining enzymes"/>
    <property type="match status" value="1"/>
</dbReference>
<dbReference type="PROSITE" id="PS51900">
    <property type="entry name" value="CB"/>
    <property type="match status" value="1"/>
</dbReference>
<dbReference type="PROSITE" id="PS51898">
    <property type="entry name" value="TYR_RECOMBINASE"/>
    <property type="match status" value="1"/>
</dbReference>
<sequence>MITSFYAFLDYLKNMKASSLHTLRNYCMDLSSLKCFLEKKSDLSPTPPLSLHDNTYDYPPLSFSLFTKDNIRLYLLEQIQTHHSKRTVRRRLSAIKSFARFCVKNQLIPENPAEMIRGPRLPQELPSPLTYEQVLALMAAPELDKVTGFRDRCLLELFYSSGLRISEITALNRADIDFQSHLLHIRGKGKKERIVPMTKVAVQWLQDYLNHPDRASVEQDHQACFLNRFGKRLSTRSIDRKFQQYLLKTGLSGSITPHTIRHTIATHWLERGMDLKTIQLLLGHTSLETTTIYTHVSMKLKKQIHDETHPHNLEE</sequence>
<feature type="chain" id="PRO_0000095291" description="Tyrosine recombinase XerC">
    <location>
        <begin position="1"/>
        <end position="315"/>
    </location>
</feature>
<feature type="domain" description="Core-binding (CB)" evidence="3">
    <location>
        <begin position="1"/>
        <end position="103"/>
    </location>
</feature>
<feature type="domain" description="Tyr recombinase" evidence="2">
    <location>
        <begin position="124"/>
        <end position="306"/>
    </location>
</feature>
<feature type="active site" evidence="1">
    <location>
        <position position="164"/>
    </location>
</feature>
<feature type="active site" evidence="1">
    <location>
        <position position="188"/>
    </location>
</feature>
<feature type="active site" evidence="1">
    <location>
        <position position="258"/>
    </location>
</feature>
<feature type="active site" evidence="1">
    <location>
        <position position="261"/>
    </location>
</feature>
<feature type="active site" evidence="1">
    <location>
        <position position="284"/>
    </location>
</feature>
<feature type="active site" description="O-(3'-phospho-DNA)-tyrosine intermediate" evidence="1">
    <location>
        <position position="293"/>
    </location>
</feature>